<evidence type="ECO:0000255" key="1">
    <source>
        <dbReference type="HAMAP-Rule" id="MF_00522"/>
    </source>
</evidence>
<gene>
    <name evidence="1" type="primary">psaJ</name>
</gene>
<geneLocation type="chloroplast"/>
<proteinExistence type="inferred from homology"/>
<sequence>MRDIKTYLSVAPVLSTLWFGALAGLLIEINRLFPDALSFPFF</sequence>
<comment type="function">
    <text evidence="1">May help in the organization of the PsaE and PsaF subunits.</text>
</comment>
<comment type="subcellular location">
    <subcellularLocation>
        <location evidence="1">Plastid</location>
        <location evidence="1">Chloroplast thylakoid membrane</location>
        <topology evidence="1">Single-pass membrane protein</topology>
    </subcellularLocation>
</comment>
<comment type="similarity">
    <text evidence="1">Belongs to the PsaJ family.</text>
</comment>
<name>PSAJ_SORBI</name>
<protein>
    <recommendedName>
        <fullName evidence="1">Photosystem I reaction center subunit IX</fullName>
    </recommendedName>
    <alternativeName>
        <fullName evidence="1">PSI-J</fullName>
    </alternativeName>
</protein>
<organism>
    <name type="scientific">Sorghum bicolor</name>
    <name type="common">Sorghum</name>
    <name type="synonym">Sorghum vulgare</name>
    <dbReference type="NCBI Taxonomy" id="4558"/>
    <lineage>
        <taxon>Eukaryota</taxon>
        <taxon>Viridiplantae</taxon>
        <taxon>Streptophyta</taxon>
        <taxon>Embryophyta</taxon>
        <taxon>Tracheophyta</taxon>
        <taxon>Spermatophyta</taxon>
        <taxon>Magnoliopsida</taxon>
        <taxon>Liliopsida</taxon>
        <taxon>Poales</taxon>
        <taxon>Poaceae</taxon>
        <taxon>PACMAD clade</taxon>
        <taxon>Panicoideae</taxon>
        <taxon>Andropogonodae</taxon>
        <taxon>Andropogoneae</taxon>
        <taxon>Sorghinae</taxon>
        <taxon>Sorghum</taxon>
    </lineage>
</organism>
<accession>A1E9U4</accession>
<dbReference type="EMBL" id="EF115542">
    <property type="protein sequence ID" value="ABK79516.1"/>
    <property type="molecule type" value="Genomic_DNA"/>
</dbReference>
<dbReference type="RefSeq" id="YP_899427.1">
    <property type="nucleotide sequence ID" value="NC_008602.1"/>
</dbReference>
<dbReference type="SMR" id="A1E9U4"/>
<dbReference type="FunCoup" id="A1E9U4">
    <property type="interactions" value="53"/>
</dbReference>
<dbReference type="STRING" id="4558.A1E9U4"/>
<dbReference type="GeneID" id="4549181"/>
<dbReference type="KEGG" id="sbi:4549181"/>
<dbReference type="InParanoid" id="A1E9U4"/>
<dbReference type="OrthoDB" id="724296at2759"/>
<dbReference type="Proteomes" id="UP000000768">
    <property type="component" value="Chloroplast"/>
</dbReference>
<dbReference type="GO" id="GO:0009535">
    <property type="term" value="C:chloroplast thylakoid membrane"/>
    <property type="evidence" value="ECO:0007669"/>
    <property type="project" value="UniProtKB-SubCell"/>
</dbReference>
<dbReference type="GO" id="GO:0009522">
    <property type="term" value="C:photosystem I"/>
    <property type="evidence" value="ECO:0007669"/>
    <property type="project" value="UniProtKB-KW"/>
</dbReference>
<dbReference type="GO" id="GO:0015979">
    <property type="term" value="P:photosynthesis"/>
    <property type="evidence" value="ECO:0007669"/>
    <property type="project" value="UniProtKB-UniRule"/>
</dbReference>
<dbReference type="FunFam" id="1.20.5.510:FF:000001">
    <property type="entry name" value="Photosystem I reaction center subunit IX"/>
    <property type="match status" value="1"/>
</dbReference>
<dbReference type="Gene3D" id="1.20.5.510">
    <property type="entry name" value="Single helix bin"/>
    <property type="match status" value="1"/>
</dbReference>
<dbReference type="HAMAP" id="MF_00522">
    <property type="entry name" value="PSI_PsaJ"/>
    <property type="match status" value="1"/>
</dbReference>
<dbReference type="InterPro" id="IPR002615">
    <property type="entry name" value="PSI_PsaJ"/>
</dbReference>
<dbReference type="InterPro" id="IPR036062">
    <property type="entry name" value="PSI_PsaJ_sf"/>
</dbReference>
<dbReference type="PANTHER" id="PTHR36082">
    <property type="match status" value="1"/>
</dbReference>
<dbReference type="PANTHER" id="PTHR36082:SF2">
    <property type="entry name" value="PHOTOSYSTEM I REACTION CENTER SUBUNIT IX"/>
    <property type="match status" value="1"/>
</dbReference>
<dbReference type="Pfam" id="PF01701">
    <property type="entry name" value="PSI_PsaJ"/>
    <property type="match status" value="1"/>
</dbReference>
<dbReference type="SUPFAM" id="SSF81544">
    <property type="entry name" value="Subunit IX of photosystem I reaction centre, PsaJ"/>
    <property type="match status" value="1"/>
</dbReference>
<keyword id="KW-0150">Chloroplast</keyword>
<keyword id="KW-0472">Membrane</keyword>
<keyword id="KW-0602">Photosynthesis</keyword>
<keyword id="KW-0603">Photosystem I</keyword>
<keyword id="KW-0934">Plastid</keyword>
<keyword id="KW-1185">Reference proteome</keyword>
<keyword id="KW-0793">Thylakoid</keyword>
<keyword id="KW-0812">Transmembrane</keyword>
<keyword id="KW-1133">Transmembrane helix</keyword>
<feature type="chain" id="PRO_0000276078" description="Photosystem I reaction center subunit IX">
    <location>
        <begin position="1"/>
        <end position="42"/>
    </location>
</feature>
<feature type="transmembrane region" description="Helical" evidence="1">
    <location>
        <begin position="7"/>
        <end position="27"/>
    </location>
</feature>
<reference key="1">
    <citation type="journal article" date="2007" name="Theor. Appl. Genet.">
        <title>Complete chloroplast genome sequences of Hordeum vulgare, Sorghum bicolor and Agrostis stolonifera, and comparative analyses with other grass genomes.</title>
        <authorList>
            <person name="Saski C."/>
            <person name="Lee S.-B."/>
            <person name="Fjellheim S."/>
            <person name="Guda C."/>
            <person name="Jansen R.K."/>
            <person name="Luo H."/>
            <person name="Tomkins J."/>
            <person name="Rognli O.A."/>
            <person name="Daniell H."/>
            <person name="Clarke J.L."/>
        </authorList>
    </citation>
    <scope>NUCLEOTIDE SEQUENCE [LARGE SCALE GENOMIC DNA]</scope>
    <source>
        <strain>cv. BTx623</strain>
    </source>
</reference>